<evidence type="ECO:0000250" key="1"/>
<evidence type="ECO:0000255" key="2"/>
<evidence type="ECO:0000269" key="3">
    <source>
    </source>
</evidence>
<evidence type="ECO:0000303" key="4">
    <source>
    </source>
</evidence>
<evidence type="ECO:0000305" key="5"/>
<comment type="function">
    <text evidence="1 3">High-affinity transporter for external inorganic phosphate (By similarity). Required for phosphate acquisition in plant.</text>
</comment>
<comment type="subcellular location">
    <subcellularLocation>
        <location evidence="1">Membrane</location>
        <topology evidence="1">Multi-pass membrane protein</topology>
    </subcellularLocation>
</comment>
<comment type="alternative products">
    <event type="alternative splicing"/>
    <isoform>
        <id>Q8H6H4-1</id>
        <name>1</name>
        <sequence type="displayed"/>
    </isoform>
    <isoform>
        <id>Q8H6H4-2</id>
        <name>2</name>
        <sequence type="described" ref="VSP_039470"/>
    </isoform>
</comment>
<comment type="tissue specificity">
    <text evidence="3">Expressed in roots, stems and leaves.</text>
</comment>
<comment type="induction">
    <text evidence="3">In roots by phosphate starvation.</text>
</comment>
<comment type="miscellaneous">
    <text>Plants overexpressing PHT1-1 accumulates almost twice the amount of phosphate in the shoots compared to the wild-type plants. Although related to the sugar transporter family, it does not transport sugars.</text>
</comment>
<comment type="similarity">
    <text evidence="5">Belongs to the major facilitator superfamily. Phosphate:H(+) symporter (TC 2.A.1.9) family.</text>
</comment>
<sequence>MAGGQLNVLSTLDQAKTQWYHFMAIVIAGMGFFTDAYDLFCISLVTKLLGRIYYTDDSKDTPGALPPNVSAAVTGVALCGTLAGQLFFGWLGDKLGRKSVYGFTLILMVVCSVASGLSFGSSAKGVVSTLCFFRFWLGFGIGGDYPLSATIMSEYANKRTRGAFIAAVFAMQGFGILFGAIVALAVSAGFRHAYPAPSYSDNHAASLVPQADYVWRIILMFGTVPAALTYYWRMKMPETARYTALIARNAKQAAADMSKVLHTQIEESADRAETVAVGGESWGLFSRQFLRRHGLHLLATTSTWFLLDIAFYSQNLFQKDIFSKVGWIPPAKTMNALEELYRIARAQALIALCGTIPGYWFTVAFIEIMGRFWIQIMGFAMMTAFMLGLAIPYHHWTTPGHHTGFIVMYGFTFFFANFGPNSTTFIVPAEIYPARLRSTCHGISAAAGKAGAIIGAFGFLYAAQDQHKPEPGYPRGIGIKNALFVLAGTNFLGTIMTLLVPESKGMSLEVISQEVADGDDEEAAYPK</sequence>
<feature type="chain" id="PRO_0000365480" description="Inorganic phosphate transporter 1-1">
    <location>
        <begin position="1"/>
        <end position="527"/>
    </location>
</feature>
<feature type="topological domain" description="Cytoplasmic" evidence="2">
    <location>
        <begin position="1"/>
        <end position="21"/>
    </location>
</feature>
<feature type="transmembrane region" description="Helical" evidence="2">
    <location>
        <begin position="22"/>
        <end position="42"/>
    </location>
</feature>
<feature type="topological domain" description="Extracellular" evidence="2">
    <location>
        <begin position="43"/>
        <end position="70"/>
    </location>
</feature>
<feature type="transmembrane region" description="Helical" evidence="2">
    <location>
        <begin position="71"/>
        <end position="91"/>
    </location>
</feature>
<feature type="topological domain" description="Cytoplasmic" evidence="2">
    <location>
        <begin position="92"/>
        <end position="99"/>
    </location>
</feature>
<feature type="transmembrane region" description="Helical" evidence="2">
    <location>
        <begin position="100"/>
        <end position="120"/>
    </location>
</feature>
<feature type="topological domain" description="Extracellular" evidence="2">
    <location>
        <begin position="121"/>
        <end position="124"/>
    </location>
</feature>
<feature type="transmembrane region" description="Helical" evidence="2">
    <location>
        <begin position="125"/>
        <end position="145"/>
    </location>
</feature>
<feature type="topological domain" description="Cytoplasmic" evidence="2">
    <location>
        <begin position="146"/>
        <end position="163"/>
    </location>
</feature>
<feature type="transmembrane region" description="Helical" evidence="2">
    <location>
        <begin position="164"/>
        <end position="184"/>
    </location>
</feature>
<feature type="topological domain" description="Extracellular" evidence="2">
    <location>
        <begin position="185"/>
        <end position="211"/>
    </location>
</feature>
<feature type="transmembrane region" description="Helical" evidence="2">
    <location>
        <begin position="212"/>
        <end position="232"/>
    </location>
</feature>
<feature type="topological domain" description="Cytoplasmic" evidence="2">
    <location>
        <begin position="233"/>
        <end position="292"/>
    </location>
</feature>
<feature type="transmembrane region" description="Helical" evidence="2">
    <location>
        <begin position="293"/>
        <end position="313"/>
    </location>
</feature>
<feature type="topological domain" description="Extracellular" evidence="2">
    <location>
        <begin position="314"/>
        <end position="348"/>
    </location>
</feature>
<feature type="transmembrane region" description="Helical" evidence="2">
    <location>
        <begin position="349"/>
        <end position="369"/>
    </location>
</feature>
<feature type="topological domain" description="Cytoplasmic" evidence="2">
    <location>
        <begin position="370"/>
        <end position="371"/>
    </location>
</feature>
<feature type="transmembrane region" description="Helical" evidence="2">
    <location>
        <begin position="372"/>
        <end position="392"/>
    </location>
</feature>
<feature type="topological domain" description="Extracellular" evidence="2">
    <location>
        <begin position="393"/>
        <end position="405"/>
    </location>
</feature>
<feature type="transmembrane region" description="Helical" evidence="2">
    <location>
        <begin position="406"/>
        <end position="426"/>
    </location>
</feature>
<feature type="topological domain" description="Cytoplasmic" evidence="2">
    <location>
        <begin position="427"/>
        <end position="442"/>
    </location>
</feature>
<feature type="transmembrane region" description="Helical" evidence="2">
    <location>
        <begin position="443"/>
        <end position="463"/>
    </location>
</feature>
<feature type="topological domain" description="Extracellular" evidence="2">
    <location>
        <begin position="464"/>
        <end position="481"/>
    </location>
</feature>
<feature type="transmembrane region" description="Helical" evidence="2">
    <location>
        <begin position="482"/>
        <end position="502"/>
    </location>
</feature>
<feature type="topological domain" description="Cytoplasmic" evidence="2">
    <location>
        <begin position="503"/>
        <end position="527"/>
    </location>
</feature>
<feature type="splice variant" id="VSP_039470" description="In isoform 2." evidence="4">
    <location>
        <begin position="444"/>
        <end position="479"/>
    </location>
</feature>
<feature type="sequence conflict" description="In Ref. 2; AAU84426." evidence="5" ref="2">
    <original>L</original>
    <variation>R</variation>
    <location>
        <position position="12"/>
    </location>
</feature>
<feature type="sequence conflict" description="In Ref. 8; AK065075." evidence="5" ref="8">
    <original>H</original>
    <variation>R</variation>
    <location>
        <position position="402"/>
    </location>
</feature>
<feature type="sequence conflict" description="In Ref. 2; AAU84426." evidence="5" ref="2">
    <original>M</original>
    <variation>T</variation>
    <location>
        <position position="506"/>
    </location>
</feature>
<protein>
    <recommendedName>
        <fullName>Inorganic phosphate transporter 1-1</fullName>
        <shortName>OsPT1</shortName>
        <shortName>OsPht1;1</shortName>
    </recommendedName>
    <alternativeName>
        <fullName>H(+)/Pi cotransporter</fullName>
    </alternativeName>
</protein>
<proteinExistence type="evidence at transcript level"/>
<organism>
    <name type="scientific">Oryza sativa subsp. japonica</name>
    <name type="common">Rice</name>
    <dbReference type="NCBI Taxonomy" id="39947"/>
    <lineage>
        <taxon>Eukaryota</taxon>
        <taxon>Viridiplantae</taxon>
        <taxon>Streptophyta</taxon>
        <taxon>Embryophyta</taxon>
        <taxon>Tracheophyta</taxon>
        <taxon>Spermatophyta</taxon>
        <taxon>Magnoliopsida</taxon>
        <taxon>Liliopsida</taxon>
        <taxon>Poales</taxon>
        <taxon>Poaceae</taxon>
        <taxon>BOP clade</taxon>
        <taxon>Oryzoideae</taxon>
        <taxon>Oryzeae</taxon>
        <taxon>Oryzinae</taxon>
        <taxon>Oryza</taxon>
        <taxon>Oryza sativa</taxon>
    </lineage>
</organism>
<gene>
    <name type="primary">PHT1-1</name>
    <name type="synonym">PT1</name>
    <name type="ordered locus">Os03g0150600</name>
    <name type="ordered locus">LOC_Os03g05620</name>
    <name type="ORF">OsJ_009086</name>
</gene>
<dbReference type="EMBL" id="AF536961">
    <property type="protein sequence ID" value="AAN39042.1"/>
    <property type="molecule type" value="Genomic_DNA"/>
</dbReference>
<dbReference type="EMBL" id="AY569607">
    <property type="protein sequence ID" value="AAU84426.1"/>
    <property type="molecule type" value="mRNA"/>
</dbReference>
<dbReference type="EMBL" id="DP000009">
    <property type="protein sequence ID" value="ABF94006.1"/>
    <property type="molecule type" value="Genomic_DNA"/>
</dbReference>
<dbReference type="EMBL" id="AP008209">
    <property type="protein sequence ID" value="BAF10891.2"/>
    <property type="molecule type" value="Genomic_DNA"/>
</dbReference>
<dbReference type="EMBL" id="AP014959">
    <property type="protein sequence ID" value="BAS82317.1"/>
    <property type="molecule type" value="Genomic_DNA"/>
</dbReference>
<dbReference type="EMBL" id="AP014959">
    <property type="protein sequence ID" value="BAS82318.1"/>
    <property type="molecule type" value="Genomic_DNA"/>
</dbReference>
<dbReference type="EMBL" id="CM000140">
    <property type="protein sequence ID" value="EAZ25603.1"/>
    <property type="molecule type" value="Genomic_DNA"/>
</dbReference>
<dbReference type="EMBL" id="AK065075">
    <property type="status" value="NOT_ANNOTATED_CDS"/>
    <property type="molecule type" value="mRNA"/>
</dbReference>
<dbReference type="RefSeq" id="XP_015631295.1">
    <property type="nucleotide sequence ID" value="XM_015775809.1"/>
</dbReference>
<dbReference type="SMR" id="Q8H6H4"/>
<dbReference type="FunCoup" id="Q8H6H4">
    <property type="interactions" value="375"/>
</dbReference>
<dbReference type="STRING" id="39947.Q8H6H4"/>
<dbReference type="PaxDb" id="39947-Q8H6H4"/>
<dbReference type="EnsemblPlants" id="Os03t0150600-01">
    <molecule id="Q8H6H4-1"/>
    <property type="protein sequence ID" value="Os03t0150600-01"/>
    <property type="gene ID" value="Os03g0150600"/>
</dbReference>
<dbReference type="Gramene" id="Os03t0150600-01">
    <molecule id="Q8H6H4-1"/>
    <property type="protein sequence ID" value="Os03t0150600-01"/>
    <property type="gene ID" value="Os03g0150600"/>
</dbReference>
<dbReference type="KEGG" id="dosa:Os03g0150600"/>
<dbReference type="eggNOG" id="KOG0252">
    <property type="taxonomic scope" value="Eukaryota"/>
</dbReference>
<dbReference type="HOGENOM" id="CLU_001265_46_14_1"/>
<dbReference type="InParanoid" id="Q8H6H4"/>
<dbReference type="OMA" id="NFLGMVM"/>
<dbReference type="OrthoDB" id="592701at2759"/>
<dbReference type="PlantReactome" id="R-OSA-9618218">
    <property type="pathway name" value="Arsenic uptake and detoxification"/>
</dbReference>
<dbReference type="Proteomes" id="UP000000763">
    <property type="component" value="Chromosome 3"/>
</dbReference>
<dbReference type="Proteomes" id="UP000007752">
    <property type="component" value="Chromosome 3"/>
</dbReference>
<dbReference type="Proteomes" id="UP000059680">
    <property type="component" value="Chromosome 3"/>
</dbReference>
<dbReference type="GO" id="GO:0016020">
    <property type="term" value="C:membrane"/>
    <property type="evidence" value="ECO:0007669"/>
    <property type="project" value="UniProtKB-SubCell"/>
</dbReference>
<dbReference type="GO" id="GO:0005315">
    <property type="term" value="F:phosphate transmembrane transporter activity"/>
    <property type="evidence" value="ECO:0007669"/>
    <property type="project" value="InterPro"/>
</dbReference>
<dbReference type="GO" id="GO:0015293">
    <property type="term" value="F:symporter activity"/>
    <property type="evidence" value="ECO:0007669"/>
    <property type="project" value="UniProtKB-KW"/>
</dbReference>
<dbReference type="GO" id="GO:0006817">
    <property type="term" value="P:phosphate ion transport"/>
    <property type="evidence" value="ECO:0007669"/>
    <property type="project" value="UniProtKB-KW"/>
</dbReference>
<dbReference type="CDD" id="cd17364">
    <property type="entry name" value="MFS_PhT"/>
    <property type="match status" value="1"/>
</dbReference>
<dbReference type="FunFam" id="1.20.1250.20:FF:000175">
    <property type="entry name" value="Inorganic phosphate transporter 1-6"/>
    <property type="match status" value="1"/>
</dbReference>
<dbReference type="Gene3D" id="1.20.1250.20">
    <property type="entry name" value="MFS general substrate transporter like domains"/>
    <property type="match status" value="2"/>
</dbReference>
<dbReference type="InterPro" id="IPR020846">
    <property type="entry name" value="MFS_dom"/>
</dbReference>
<dbReference type="InterPro" id="IPR005828">
    <property type="entry name" value="MFS_sugar_transport-like"/>
</dbReference>
<dbReference type="InterPro" id="IPR036259">
    <property type="entry name" value="MFS_trans_sf"/>
</dbReference>
<dbReference type="InterPro" id="IPR004738">
    <property type="entry name" value="Phos_permease"/>
</dbReference>
<dbReference type="NCBIfam" id="TIGR00887">
    <property type="entry name" value="2A0109"/>
    <property type="match status" value="1"/>
</dbReference>
<dbReference type="PANTHER" id="PTHR24064">
    <property type="entry name" value="SOLUTE CARRIER FAMILY 22 MEMBER"/>
    <property type="match status" value="1"/>
</dbReference>
<dbReference type="Pfam" id="PF00083">
    <property type="entry name" value="Sugar_tr"/>
    <property type="match status" value="1"/>
</dbReference>
<dbReference type="SUPFAM" id="SSF103473">
    <property type="entry name" value="MFS general substrate transporter"/>
    <property type="match status" value="1"/>
</dbReference>
<dbReference type="PROSITE" id="PS50850">
    <property type="entry name" value="MFS"/>
    <property type="match status" value="1"/>
</dbReference>
<reference key="1">
    <citation type="journal article" date="2002" name="Proc. Natl. Acad. Sci. U.S.A.">
        <title>Rice phosphate transporters include an evolutionarily divergent gene specifically activated in arbuscular mycorrhizal symbiosis.</title>
        <authorList>
            <person name="Paszkowski U."/>
            <person name="Kroken S."/>
            <person name="Roux C."/>
            <person name="Briggs S.P."/>
        </authorList>
    </citation>
    <scope>NUCLEOTIDE SEQUENCE [GENOMIC DNA]</scope>
</reference>
<reference key="2">
    <citation type="submission" date="2004-03" db="EMBL/GenBank/DDBJ databases">
        <title>Regulation of rice phosphate transporter gene expression by phosphate availability.</title>
        <authorList>
            <person name="Baek S.-H."/>
            <person name="Kim H.-S."/>
            <person name="Yun S.J."/>
        </authorList>
    </citation>
    <scope>NUCLEOTIDE SEQUENCE [MRNA] (ISOFORM 1)</scope>
    <source>
        <strain>cv. Dongjin</strain>
    </source>
</reference>
<reference key="3">
    <citation type="journal article" date="2005" name="Genome Res.">
        <title>Sequence, annotation, and analysis of synteny between rice chromosome 3 and diverged grass species.</title>
        <authorList>
            <consortium name="The rice chromosome 3 sequencing consortium"/>
            <person name="Buell C.R."/>
            <person name="Yuan Q."/>
            <person name="Ouyang S."/>
            <person name="Liu J."/>
            <person name="Zhu W."/>
            <person name="Wang A."/>
            <person name="Maiti R."/>
            <person name="Haas B."/>
            <person name="Wortman J."/>
            <person name="Pertea M."/>
            <person name="Jones K.M."/>
            <person name="Kim M."/>
            <person name="Overton L."/>
            <person name="Tsitrin T."/>
            <person name="Fadrosh D."/>
            <person name="Bera J."/>
            <person name="Weaver B."/>
            <person name="Jin S."/>
            <person name="Johri S."/>
            <person name="Reardon M."/>
            <person name="Webb K."/>
            <person name="Hill J."/>
            <person name="Moffat K."/>
            <person name="Tallon L."/>
            <person name="Van Aken S."/>
            <person name="Lewis M."/>
            <person name="Utterback T."/>
            <person name="Feldblyum T."/>
            <person name="Zismann V."/>
            <person name="Iobst S."/>
            <person name="Hsiao J."/>
            <person name="de Vazeille A.R."/>
            <person name="Salzberg S.L."/>
            <person name="White O."/>
            <person name="Fraser C.M."/>
            <person name="Yu Y."/>
            <person name="Kim H."/>
            <person name="Rambo T."/>
            <person name="Currie J."/>
            <person name="Collura K."/>
            <person name="Kernodle-Thompson S."/>
            <person name="Wei F."/>
            <person name="Kudrna K."/>
            <person name="Ammiraju J.S.S."/>
            <person name="Luo M."/>
            <person name="Goicoechea J.L."/>
            <person name="Wing R.A."/>
            <person name="Henry D."/>
            <person name="Oates R."/>
            <person name="Palmer M."/>
            <person name="Pries G."/>
            <person name="Saski C."/>
            <person name="Simmons J."/>
            <person name="Soderlund C."/>
            <person name="Nelson W."/>
            <person name="de la Bastide M."/>
            <person name="Spiegel L."/>
            <person name="Nascimento L."/>
            <person name="Huang E."/>
            <person name="Preston R."/>
            <person name="Zutavern T."/>
            <person name="Palmer L."/>
            <person name="O'Shaughnessy A."/>
            <person name="Dike S."/>
            <person name="McCombie W.R."/>
            <person name="Minx P."/>
            <person name="Cordum H."/>
            <person name="Wilson R."/>
            <person name="Jin W."/>
            <person name="Lee H.R."/>
            <person name="Jiang J."/>
            <person name="Jackson S."/>
        </authorList>
    </citation>
    <scope>NUCLEOTIDE SEQUENCE [LARGE SCALE GENOMIC DNA]</scope>
    <source>
        <strain>cv. Nipponbare</strain>
    </source>
</reference>
<reference key="4">
    <citation type="journal article" date="2005" name="Nature">
        <title>The map-based sequence of the rice genome.</title>
        <authorList>
            <consortium name="International rice genome sequencing project (IRGSP)"/>
        </authorList>
    </citation>
    <scope>NUCLEOTIDE SEQUENCE [LARGE SCALE GENOMIC DNA]</scope>
    <source>
        <strain>cv. Nipponbare</strain>
    </source>
</reference>
<reference key="5">
    <citation type="journal article" date="2008" name="Nucleic Acids Res.">
        <title>The rice annotation project database (RAP-DB): 2008 update.</title>
        <authorList>
            <consortium name="The rice annotation project (RAP)"/>
        </authorList>
    </citation>
    <scope>GENOME REANNOTATION</scope>
    <source>
        <strain>cv. Nipponbare</strain>
    </source>
</reference>
<reference key="6">
    <citation type="journal article" date="2013" name="Rice">
        <title>Improvement of the Oryza sativa Nipponbare reference genome using next generation sequence and optical map data.</title>
        <authorList>
            <person name="Kawahara Y."/>
            <person name="de la Bastide M."/>
            <person name="Hamilton J.P."/>
            <person name="Kanamori H."/>
            <person name="McCombie W.R."/>
            <person name="Ouyang S."/>
            <person name="Schwartz D.C."/>
            <person name="Tanaka T."/>
            <person name="Wu J."/>
            <person name="Zhou S."/>
            <person name="Childs K.L."/>
            <person name="Davidson R.M."/>
            <person name="Lin H."/>
            <person name="Quesada-Ocampo L."/>
            <person name="Vaillancourt B."/>
            <person name="Sakai H."/>
            <person name="Lee S.S."/>
            <person name="Kim J."/>
            <person name="Numa H."/>
            <person name="Itoh T."/>
            <person name="Buell C.R."/>
            <person name="Matsumoto T."/>
        </authorList>
    </citation>
    <scope>GENOME REANNOTATION</scope>
    <source>
        <strain>cv. Nipponbare</strain>
    </source>
</reference>
<reference key="7">
    <citation type="journal article" date="2005" name="PLoS Biol.">
        <title>The genomes of Oryza sativa: a history of duplications.</title>
        <authorList>
            <person name="Yu J."/>
            <person name="Wang J."/>
            <person name="Lin W."/>
            <person name="Li S."/>
            <person name="Li H."/>
            <person name="Zhou J."/>
            <person name="Ni P."/>
            <person name="Dong W."/>
            <person name="Hu S."/>
            <person name="Zeng C."/>
            <person name="Zhang J."/>
            <person name="Zhang Y."/>
            <person name="Li R."/>
            <person name="Xu Z."/>
            <person name="Li S."/>
            <person name="Li X."/>
            <person name="Zheng H."/>
            <person name="Cong L."/>
            <person name="Lin L."/>
            <person name="Yin J."/>
            <person name="Geng J."/>
            <person name="Li G."/>
            <person name="Shi J."/>
            <person name="Liu J."/>
            <person name="Lv H."/>
            <person name="Li J."/>
            <person name="Wang J."/>
            <person name="Deng Y."/>
            <person name="Ran L."/>
            <person name="Shi X."/>
            <person name="Wang X."/>
            <person name="Wu Q."/>
            <person name="Li C."/>
            <person name="Ren X."/>
            <person name="Wang J."/>
            <person name="Wang X."/>
            <person name="Li D."/>
            <person name="Liu D."/>
            <person name="Zhang X."/>
            <person name="Ji Z."/>
            <person name="Zhao W."/>
            <person name="Sun Y."/>
            <person name="Zhang Z."/>
            <person name="Bao J."/>
            <person name="Han Y."/>
            <person name="Dong L."/>
            <person name="Ji J."/>
            <person name="Chen P."/>
            <person name="Wu S."/>
            <person name="Liu J."/>
            <person name="Xiao Y."/>
            <person name="Bu D."/>
            <person name="Tan J."/>
            <person name="Yang L."/>
            <person name="Ye C."/>
            <person name="Zhang J."/>
            <person name="Xu J."/>
            <person name="Zhou Y."/>
            <person name="Yu Y."/>
            <person name="Zhang B."/>
            <person name="Zhuang S."/>
            <person name="Wei H."/>
            <person name="Liu B."/>
            <person name="Lei M."/>
            <person name="Yu H."/>
            <person name="Li Y."/>
            <person name="Xu H."/>
            <person name="Wei S."/>
            <person name="He X."/>
            <person name="Fang L."/>
            <person name="Zhang Z."/>
            <person name="Zhang Y."/>
            <person name="Huang X."/>
            <person name="Su Z."/>
            <person name="Tong W."/>
            <person name="Li J."/>
            <person name="Tong Z."/>
            <person name="Li S."/>
            <person name="Ye J."/>
            <person name="Wang L."/>
            <person name="Fang L."/>
            <person name="Lei T."/>
            <person name="Chen C.-S."/>
            <person name="Chen H.-C."/>
            <person name="Xu Z."/>
            <person name="Li H."/>
            <person name="Huang H."/>
            <person name="Zhang F."/>
            <person name="Xu H."/>
            <person name="Li N."/>
            <person name="Zhao C."/>
            <person name="Li S."/>
            <person name="Dong L."/>
            <person name="Huang Y."/>
            <person name="Li L."/>
            <person name="Xi Y."/>
            <person name="Qi Q."/>
            <person name="Li W."/>
            <person name="Zhang B."/>
            <person name="Hu W."/>
            <person name="Zhang Y."/>
            <person name="Tian X."/>
            <person name="Jiao Y."/>
            <person name="Liang X."/>
            <person name="Jin J."/>
            <person name="Gao L."/>
            <person name="Zheng W."/>
            <person name="Hao B."/>
            <person name="Liu S.-M."/>
            <person name="Wang W."/>
            <person name="Yuan L."/>
            <person name="Cao M."/>
            <person name="McDermott J."/>
            <person name="Samudrala R."/>
            <person name="Wang J."/>
            <person name="Wong G.K.-S."/>
            <person name="Yang H."/>
        </authorList>
    </citation>
    <scope>NUCLEOTIDE SEQUENCE [LARGE SCALE GENOMIC DNA]</scope>
    <source>
        <strain>cv. Nipponbare</strain>
    </source>
</reference>
<reference key="8">
    <citation type="journal article" date="2003" name="Science">
        <title>Collection, mapping, and annotation of over 28,000 cDNA clones from japonica rice.</title>
        <authorList>
            <consortium name="The rice full-length cDNA consortium"/>
        </authorList>
    </citation>
    <scope>NUCLEOTIDE SEQUENCE [LARGE SCALE MRNA] (ISOFORM 2)</scope>
    <source>
        <strain>cv. Nipponbare</strain>
    </source>
</reference>
<reference key="9">
    <citation type="journal article" date="2008" name="Biotechnol. Lett.">
        <title>Increased expression of OsPT1, a high-affinity phosphate transporter, enhances phosphate acquisition in rice.</title>
        <authorList>
            <person name="Seo H.-M."/>
            <person name="Jung Y."/>
            <person name="Song S."/>
            <person name="Kim Y."/>
            <person name="Kwon T."/>
            <person name="Kim D.-H."/>
            <person name="Jeung S.-J."/>
            <person name="Yi Y.-B."/>
            <person name="Yi G."/>
            <person name="Nam M.-H."/>
            <person name="Nam J."/>
        </authorList>
    </citation>
    <scope>FUNCTION</scope>
    <scope>TISSUE SPECIFICITY</scope>
    <scope>INDUCTION</scope>
</reference>
<name>PHT11_ORYSJ</name>
<accession>Q8H6H4</accession>
<accession>A0A0P0VT26</accession>
<accession>Q56UU2</accession>
<keyword id="KW-0025">Alternative splicing</keyword>
<keyword id="KW-0472">Membrane</keyword>
<keyword id="KW-0592">Phosphate transport</keyword>
<keyword id="KW-1185">Reference proteome</keyword>
<keyword id="KW-0769">Symport</keyword>
<keyword id="KW-0812">Transmembrane</keyword>
<keyword id="KW-1133">Transmembrane helix</keyword>
<keyword id="KW-0813">Transport</keyword>